<reference key="1">
    <citation type="journal article" date="1985" name="J. Bacteriol.">
        <title>Comparison of the regulatory regions of ilvGEDA operons from several enteric organisms.</title>
        <authorList>
            <person name="Harms E."/>
            <person name="Hsu J.-H."/>
            <person name="Subrahmanyam C.S."/>
            <person name="Umbarger H.E."/>
        </authorList>
    </citation>
    <scope>NUCLEOTIDE SEQUENCE [GENOMIC DNA]</scope>
</reference>
<reference key="2">
    <citation type="submission" date="1986-04" db="EMBL/GenBank/DDBJ databases">
        <authorList>
            <person name="Umbarger H.E."/>
        </authorList>
    </citation>
    <scope>SEQUENCE REVISION</scope>
</reference>
<accession>P62525</accession>
<accession>P03060</accession>
<feature type="peptide" id="PRO_0000044755" description="ilv operon leader peptide">
    <location>
        <begin position="1"/>
        <end position="32"/>
    </location>
</feature>
<sequence>MTALLRVISLVVISVVVIIIPPCGAALGRGKA</sequence>
<gene>
    <name type="primary">ilvL</name>
</gene>
<keyword id="KW-0028">Amino-acid biosynthesis</keyword>
<keyword id="KW-0100">Branched-chain amino acid biosynthesis</keyword>
<keyword id="KW-0428">Leader peptide</keyword>
<dbReference type="EMBL" id="M11652">
    <property type="protein sequence ID" value="AAA25080.1"/>
    <property type="molecule type" value="Genomic_DNA"/>
</dbReference>
<dbReference type="RefSeq" id="WP_001311244.1">
    <property type="nucleotide sequence ID" value="NZ_WPHE01000014.1"/>
</dbReference>
<dbReference type="GeneID" id="98391002"/>
<dbReference type="GO" id="GO:0008652">
    <property type="term" value="P:amino acid biosynthetic process"/>
    <property type="evidence" value="ECO:0007669"/>
    <property type="project" value="UniProtKB-KW"/>
</dbReference>
<dbReference type="GO" id="GO:0009082">
    <property type="term" value="P:branched-chain amino acid biosynthetic process"/>
    <property type="evidence" value="ECO:0007669"/>
    <property type="project" value="UniProtKB-KW"/>
</dbReference>
<dbReference type="InterPro" id="IPR012567">
    <property type="entry name" value="IlvGEDA_leader"/>
</dbReference>
<dbReference type="NCBIfam" id="NF007744">
    <property type="entry name" value="PRK10424.1"/>
    <property type="match status" value="1"/>
</dbReference>
<dbReference type="Pfam" id="PF08046">
    <property type="entry name" value="IlvGEDA_leader"/>
    <property type="match status" value="1"/>
</dbReference>
<protein>
    <recommendedName>
        <fullName>ilv operon leader peptide</fullName>
    </recommendedName>
    <alternativeName>
        <fullName>ilvGMEDA operon attenuator peptide</fullName>
    </alternativeName>
</protein>
<proteinExistence type="predicted"/>
<organism>
    <name type="scientific">Klebsiella aerogenes</name>
    <name type="common">Enterobacter aerogenes</name>
    <dbReference type="NCBI Taxonomy" id="548"/>
    <lineage>
        <taxon>Bacteria</taxon>
        <taxon>Pseudomonadati</taxon>
        <taxon>Pseudomonadota</taxon>
        <taxon>Gammaproteobacteria</taxon>
        <taxon>Enterobacterales</taxon>
        <taxon>Enterobacteriaceae</taxon>
        <taxon>Klebsiella/Raoultella group</taxon>
        <taxon>Klebsiella</taxon>
    </lineage>
</organism>
<name>LPID_KLEAE</name>